<feature type="chain" id="PRO_0000424881" description="Methyl-accepting chemotaxis protein NahY">
    <location>
        <begin position="1"/>
        <end position="538"/>
    </location>
</feature>
<feature type="topological domain" description="Cytoplasmic" evidence="1">
    <location>
        <begin position="1"/>
        <end position="9"/>
    </location>
</feature>
<feature type="transmembrane region" description="Helical" evidence="1">
    <location>
        <begin position="10"/>
        <end position="30"/>
    </location>
</feature>
<feature type="topological domain" description="Periplasmic" evidence="1">
    <location>
        <begin position="31"/>
        <end position="187"/>
    </location>
</feature>
<feature type="transmembrane region" description="Helical" evidence="1">
    <location>
        <begin position="188"/>
        <end position="208"/>
    </location>
</feature>
<feature type="topological domain" description="Cytoplasmic" evidence="1">
    <location>
        <begin position="209"/>
        <end position="538"/>
    </location>
</feature>
<feature type="domain" description="HAMP" evidence="2">
    <location>
        <begin position="209"/>
        <end position="261"/>
    </location>
</feature>
<feature type="domain" description="Methyl-accepting transducer" evidence="3">
    <location>
        <begin position="266"/>
        <end position="502"/>
    </location>
</feature>
<comment type="function">
    <text evidence="4">Chemotactic-signal transducers respond to changes in the concentration of attractants and repellents in the environment, transduce a signal from the outside to the inside of the cell, and facilitate sensory adaptation through the variation of the level of methylation. Chemoreceptor for naphthalene or a related compound. May facilitate biodegradation.</text>
</comment>
<comment type="subcellular location">
    <subcellularLocation>
        <location evidence="5">Cell inner membrane</location>
        <topology evidence="5">Multi-pass membrane protein</topology>
    </subcellularLocation>
</comment>
<comment type="disruption phenotype">
    <text evidence="4">Mutant grows on naphthalene but is not chemotactic to this aromatic hydrocarbon. Mutant has a wild-type chemotactic response to succinate, benzoate, salicylate and 4-hydroxybenzoate.</text>
</comment>
<comment type="similarity">
    <text evidence="5">Belongs to the methyl-accepting chemotaxis (MCP) protein family.</text>
</comment>
<geneLocation type="plasmid">
    <name>NAH7</name>
</geneLocation>
<dbReference type="EMBL" id="AF100302">
    <property type="protein sequence ID" value="AAD13223.1"/>
    <property type="molecule type" value="Genomic_DNA"/>
</dbReference>
<dbReference type="EMBL" id="AB237655">
    <property type="protein sequence ID" value="BAE92176.1"/>
    <property type="molecule type" value="Genomic_DNA"/>
</dbReference>
<dbReference type="RefSeq" id="WP_011475397.1">
    <property type="nucleotide sequence ID" value="NC_007926.1"/>
</dbReference>
<dbReference type="RefSeq" id="YP_534842.1">
    <property type="nucleotide sequence ID" value="NC_007926.1"/>
</dbReference>
<dbReference type="SMR" id="Q9Z429"/>
<dbReference type="BindingDB" id="Q9Z429"/>
<dbReference type="GO" id="GO:0005886">
    <property type="term" value="C:plasma membrane"/>
    <property type="evidence" value="ECO:0007669"/>
    <property type="project" value="UniProtKB-SubCell"/>
</dbReference>
<dbReference type="GO" id="GO:0004888">
    <property type="term" value="F:transmembrane signaling receptor activity"/>
    <property type="evidence" value="ECO:0007669"/>
    <property type="project" value="InterPro"/>
</dbReference>
<dbReference type="GO" id="GO:0006935">
    <property type="term" value="P:chemotaxis"/>
    <property type="evidence" value="ECO:0007669"/>
    <property type="project" value="UniProtKB-KW"/>
</dbReference>
<dbReference type="GO" id="GO:0007165">
    <property type="term" value="P:signal transduction"/>
    <property type="evidence" value="ECO:0007669"/>
    <property type="project" value="UniProtKB-KW"/>
</dbReference>
<dbReference type="CDD" id="cd06225">
    <property type="entry name" value="HAMP"/>
    <property type="match status" value="1"/>
</dbReference>
<dbReference type="CDD" id="cd11386">
    <property type="entry name" value="MCP_signal"/>
    <property type="match status" value="1"/>
</dbReference>
<dbReference type="FunFam" id="1.10.287.950:FF:000001">
    <property type="entry name" value="Methyl-accepting chemotaxis sensory transducer"/>
    <property type="match status" value="1"/>
</dbReference>
<dbReference type="Gene3D" id="1.10.287.950">
    <property type="entry name" value="Methyl-accepting chemotaxis protein"/>
    <property type="match status" value="1"/>
</dbReference>
<dbReference type="InterPro" id="IPR004090">
    <property type="entry name" value="Chemotax_Me-accpt_rcpt"/>
</dbReference>
<dbReference type="InterPro" id="IPR003660">
    <property type="entry name" value="HAMP_dom"/>
</dbReference>
<dbReference type="InterPro" id="IPR024478">
    <property type="entry name" value="HlyB_4HB_MCP"/>
</dbReference>
<dbReference type="InterPro" id="IPR004089">
    <property type="entry name" value="MCPsignal_dom"/>
</dbReference>
<dbReference type="InterPro" id="IPR000727">
    <property type="entry name" value="T_SNARE_dom"/>
</dbReference>
<dbReference type="PANTHER" id="PTHR32089">
    <property type="entry name" value="METHYL-ACCEPTING CHEMOTAXIS PROTEIN MCPB"/>
    <property type="match status" value="1"/>
</dbReference>
<dbReference type="PANTHER" id="PTHR32089:SF120">
    <property type="entry name" value="METHYL-ACCEPTING CHEMOTAXIS PROTEIN TLPQ"/>
    <property type="match status" value="1"/>
</dbReference>
<dbReference type="Pfam" id="PF12729">
    <property type="entry name" value="4HB_MCP_1"/>
    <property type="match status" value="1"/>
</dbReference>
<dbReference type="Pfam" id="PF00672">
    <property type="entry name" value="HAMP"/>
    <property type="match status" value="1"/>
</dbReference>
<dbReference type="Pfam" id="PF00015">
    <property type="entry name" value="MCPsignal"/>
    <property type="match status" value="1"/>
</dbReference>
<dbReference type="PRINTS" id="PR00260">
    <property type="entry name" value="CHEMTRNSDUCR"/>
</dbReference>
<dbReference type="SMART" id="SM00304">
    <property type="entry name" value="HAMP"/>
    <property type="match status" value="1"/>
</dbReference>
<dbReference type="SMART" id="SM00283">
    <property type="entry name" value="MA"/>
    <property type="match status" value="1"/>
</dbReference>
<dbReference type="SUPFAM" id="SSF58104">
    <property type="entry name" value="Methyl-accepting chemotaxis protein (MCP) signaling domain"/>
    <property type="match status" value="1"/>
</dbReference>
<dbReference type="PROSITE" id="PS50111">
    <property type="entry name" value="CHEMOTAXIS_TRANSDUC_2"/>
    <property type="match status" value="1"/>
</dbReference>
<dbReference type="PROSITE" id="PS50885">
    <property type="entry name" value="HAMP"/>
    <property type="match status" value="1"/>
</dbReference>
<keyword id="KW-0997">Cell inner membrane</keyword>
<keyword id="KW-1003">Cell membrane</keyword>
<keyword id="KW-0145">Chemotaxis</keyword>
<keyword id="KW-0472">Membrane</keyword>
<keyword id="KW-0488">Methylation</keyword>
<keyword id="KW-0614">Plasmid</keyword>
<keyword id="KW-0807">Transducer</keyword>
<keyword id="KW-0812">Transmembrane</keyword>
<keyword id="KW-1133">Transmembrane helix</keyword>
<organism>
    <name type="scientific">Pseudomonas putida</name>
    <name type="common">Arthrobacter siderocapsulatus</name>
    <dbReference type="NCBI Taxonomy" id="303"/>
    <lineage>
        <taxon>Bacteria</taxon>
        <taxon>Pseudomonadati</taxon>
        <taxon>Pseudomonadota</taxon>
        <taxon>Gammaproteobacteria</taxon>
        <taxon>Pseudomonadales</taxon>
        <taxon>Pseudomonadaceae</taxon>
        <taxon>Pseudomonas</taxon>
    </lineage>
</organism>
<sequence length="538" mass="58716">MQQFTIRTRLLMLVGAMFIGFITIELMGFSALQRGVASLNTVYLDRVVPLRDLKTIADLYAVKIVDSSHKARSGRMTYAQAEQEVKDAGRQIDMLWHAYQKTKKIDEEQRSVDALAKLVDEAQDPIERLKGILERGDKAALDTFVENEMYPLIDPLSEGLSHLTQIQVEESKRAYDAAVVLYDSSRTMLALLLLGILICGGVFATRLIRSIIHPLTTLKDAAARVALGDLSQSIQVSGRNEVTDVQQSVQAMQANLRNTLQDIQGSAAQLAAAAEELQTATESTAQGIHRQNDEMQMAATAVTEMSAAVDEVADNANRTSNASHEAMDLADGGRKQVMLTRETIDRLSGKLNETTRTVFRLAEEASNIGRVLDVIRAIAEQTKLLALNAAIEAAHAGEAGRGFAVVADEVRNLAQRTQTSTQEIERMISAIQSVTQEGVRDVQQSCEFAARSQTMSSEADQALTLIAERITEINGMNLVIASAAEEQAQVAREVDRNLVAISDISEQSTAGVQQTSEASEELARLAANLNNLVNRFSM</sequence>
<evidence type="ECO:0000255" key="1"/>
<evidence type="ECO:0000255" key="2">
    <source>
        <dbReference type="PROSITE-ProRule" id="PRU00102"/>
    </source>
</evidence>
<evidence type="ECO:0000255" key="3">
    <source>
        <dbReference type="PROSITE-ProRule" id="PRU00284"/>
    </source>
</evidence>
<evidence type="ECO:0000269" key="4">
    <source>
    </source>
</evidence>
<evidence type="ECO:0000305" key="5"/>
<protein>
    <recommendedName>
        <fullName>Methyl-accepting chemotaxis protein NahY</fullName>
    </recommendedName>
</protein>
<proteinExistence type="inferred from homology"/>
<gene>
    <name type="primary">nahY</name>
</gene>
<accession>Q9Z429</accession>
<reference key="1">
    <citation type="journal article" date="1999" name="J. Bacteriol.">
        <title>NahY, a catabolic plasmid-encoded receptor required for chemotaxis of Pseudomonas putida to the aromatic hydrocarbon naphthalene.</title>
        <authorList>
            <person name="Grimm A.C."/>
            <person name="Harwood C.S."/>
        </authorList>
    </citation>
    <scope>NUCLEOTIDE SEQUENCE [GENOMIC DNA]</scope>
    <scope>FUNCTION</scope>
    <scope>DISRUPTION PHENOTYPE</scope>
    <source>
        <strain>ATCC 17485 / DSM 50208 / JCM 6158 / NCIMB 12092 / Stanier 111 / Biotype A</strain>
        <plasmid>NAH7</plasmid>
    </source>
</reference>
<reference key="2">
    <citation type="journal article" date="2006" name="J. Bacteriol.">
        <title>Genomic and functional analysis of the IncP-9 naphthalene-catabolic plasmid NAH7 and its transposon Tn4655 suggests catabolic gene spread by a tyrosine recombinase.</title>
        <authorList>
            <person name="Sota M."/>
            <person name="Yano H."/>
            <person name="Ono A."/>
            <person name="Miyazaki R."/>
            <person name="Ishii H."/>
            <person name="Genka H."/>
            <person name="Top E.M."/>
            <person name="Tsuda M."/>
        </authorList>
    </citation>
    <scope>NUCLEOTIDE SEQUENCE [GENOMIC DNA]</scope>
    <source>
        <strain>ATCC 17485 / DSM 50208 / JCM 6158 / NCIMB 12092 / Stanier 111 / Biotype A</strain>
        <plasmid>NAH7</plasmid>
    </source>
</reference>
<name>NAHY_PSEPU</name>